<keyword id="KW-1003">Cell membrane</keyword>
<keyword id="KW-1015">Disulfide bond</keyword>
<keyword id="KW-0297">G-protein coupled receptor</keyword>
<keyword id="KW-0325">Glycoprotein</keyword>
<keyword id="KW-0472">Membrane</keyword>
<keyword id="KW-0675">Receptor</keyword>
<keyword id="KW-1185">Reference proteome</keyword>
<keyword id="KW-0807">Transducer</keyword>
<keyword id="KW-0812">Transmembrane</keyword>
<keyword id="KW-1133">Transmembrane helix</keyword>
<feature type="chain" id="PRO_0000070170" description="Trace amine-associated receptor 7e">
    <location>
        <begin position="1"/>
        <end position="358"/>
    </location>
</feature>
<feature type="topological domain" description="Extracellular" evidence="4">
    <location>
        <begin position="1"/>
        <end position="47"/>
    </location>
</feature>
<feature type="transmembrane region" description="Helical; Name=1" evidence="4">
    <location>
        <begin position="48"/>
        <end position="68"/>
    </location>
</feature>
<feature type="topological domain" description="Cytoplasmic" evidence="4">
    <location>
        <begin position="69"/>
        <end position="83"/>
    </location>
</feature>
<feature type="transmembrane region" description="Helical; Name=2" evidence="4">
    <location>
        <begin position="84"/>
        <end position="104"/>
    </location>
</feature>
<feature type="topological domain" description="Extracellular" evidence="4">
    <location>
        <begin position="105"/>
        <end position="121"/>
    </location>
</feature>
<feature type="transmembrane region" description="Helical; Name=3" evidence="4">
    <location>
        <begin position="122"/>
        <end position="143"/>
    </location>
</feature>
<feature type="topological domain" description="Cytoplasmic" evidence="4">
    <location>
        <begin position="144"/>
        <end position="166"/>
    </location>
</feature>
<feature type="transmembrane region" description="Helical; Name=4" evidence="4">
    <location>
        <begin position="167"/>
        <end position="187"/>
    </location>
</feature>
<feature type="topological domain" description="Extracellular" evidence="4">
    <location>
        <begin position="188"/>
        <end position="212"/>
    </location>
</feature>
<feature type="transmembrane region" description="Helical; Name=5" evidence="4">
    <location>
        <begin position="213"/>
        <end position="233"/>
    </location>
</feature>
<feature type="topological domain" description="Cytoplasmic" evidence="4">
    <location>
        <begin position="234"/>
        <end position="274"/>
    </location>
</feature>
<feature type="transmembrane region" description="Helical; Name=6" evidence="4">
    <location>
        <begin position="275"/>
        <end position="295"/>
    </location>
</feature>
<feature type="topological domain" description="Extracellular" evidence="4">
    <location>
        <begin position="296"/>
        <end position="309"/>
    </location>
</feature>
<feature type="transmembrane region" description="Helical; Name=7" evidence="4">
    <location>
        <begin position="310"/>
        <end position="333"/>
    </location>
</feature>
<feature type="topological domain" description="Cytoplasmic" evidence="4">
    <location>
        <begin position="334"/>
        <end position="358"/>
    </location>
</feature>
<feature type="glycosylation site" description="N-linked (GlcNAc...) asparagine" evidence="4">
    <location>
        <position position="34"/>
    </location>
</feature>
<feature type="glycosylation site" description="N-linked (GlcNAc...) asparagine" evidence="4">
    <location>
        <position position="210"/>
    </location>
</feature>
<feature type="disulfide bond" evidence="1">
    <location>
        <begin position="37"/>
        <end position="201"/>
    </location>
</feature>
<feature type="disulfide bond" evidence="5">
    <location>
        <begin position="120"/>
        <end position="205"/>
    </location>
</feature>
<reference key="1">
    <citation type="journal article" date="2001" name="Proc. Natl. Acad. Sci. U.S.A.">
        <title>Trace amines: identification of a family of mammalian G protein-coupled receptors.</title>
        <authorList>
            <person name="Borowsky B."/>
            <person name="Adham N."/>
            <person name="Jones K.A."/>
            <person name="Raddatz R."/>
            <person name="Artymyshyn R."/>
            <person name="Ogozalek K.L."/>
            <person name="Durkin M.M."/>
            <person name="Lakhlani P.P."/>
            <person name="Bonini J.A."/>
            <person name="Pathirana S."/>
            <person name="Boyle N."/>
            <person name="Pu X."/>
            <person name="Kouranova E."/>
            <person name="Lichtblau H."/>
            <person name="Ochoa F.Y."/>
            <person name="Branchek T.A."/>
            <person name="Gerald C."/>
        </authorList>
    </citation>
    <scope>NUCLEOTIDE SEQUENCE [GENOMIC DNA]</scope>
    <source>
        <strain>Sprague-Dawley</strain>
    </source>
</reference>
<gene>
    <name evidence="7" type="primary">Taar7e</name>
    <name evidence="6" type="synonym">Ta14</name>
    <name evidence="6" type="synonym">Tar14</name>
    <name evidence="6" type="synonym">Trar14</name>
</gene>
<comment type="function">
    <text evidence="3">Olfactory receptor specific for N,N-dimethylalkylamines trace amines. Trace amine compounds are enriched in animal body fluids and act on trace amine-associated receptors (TAARs) to elicit both intraspecific and interspecific innate behaviors. Ligand-binding causes a conformation change that triggers signaling via G(s)-class of G alpha proteins (GNAL or GNAS).</text>
</comment>
<comment type="subcellular location">
    <subcellularLocation>
        <location evidence="2">Cell membrane</location>
        <topology evidence="4">Multi-pass membrane protein</topology>
    </subcellularLocation>
</comment>
<comment type="domain">
    <text evidence="1">In addition to the well known disulfide bond common to G-protein coupled receptor 1 family, trace amine-associated receptors (TAARs) contain an unique disulfide bond (Cys-37-Cys-201) connecting the N-terminus to the extracellular Loop 2 (ECL2), which is required for agonist-induced receptor activation.</text>
</comment>
<comment type="similarity">
    <text evidence="5">Belongs to the G-protein coupled receptor 1 family.</text>
</comment>
<accession>Q923X6</accession>
<protein>
    <recommendedName>
        <fullName>Trace amine-associated receptor 7e</fullName>
        <shortName>TaR-7e</shortName>
        <shortName>Trace amine receptor 7e</shortName>
    </recommendedName>
    <alternativeName>
        <fullName evidence="6">Trace amine receptor 14</fullName>
        <shortName evidence="6">TaR-14</shortName>
    </alternativeName>
</protein>
<organism>
    <name type="scientific">Rattus norvegicus</name>
    <name type="common">Rat</name>
    <dbReference type="NCBI Taxonomy" id="10116"/>
    <lineage>
        <taxon>Eukaryota</taxon>
        <taxon>Metazoa</taxon>
        <taxon>Chordata</taxon>
        <taxon>Craniata</taxon>
        <taxon>Vertebrata</taxon>
        <taxon>Euteleostomi</taxon>
        <taxon>Mammalia</taxon>
        <taxon>Eutheria</taxon>
        <taxon>Euarchontoglires</taxon>
        <taxon>Glires</taxon>
        <taxon>Rodentia</taxon>
        <taxon>Myomorpha</taxon>
        <taxon>Muroidea</taxon>
        <taxon>Muridae</taxon>
        <taxon>Murinae</taxon>
        <taxon>Rattus</taxon>
    </lineage>
</organism>
<proteinExistence type="inferred from homology"/>
<dbReference type="EMBL" id="AF380202">
    <property type="protein sequence ID" value="AAK71253.1"/>
    <property type="molecule type" value="Genomic_DNA"/>
</dbReference>
<dbReference type="SMR" id="Q923X6"/>
<dbReference type="FunCoup" id="Q923X6">
    <property type="interactions" value="32"/>
</dbReference>
<dbReference type="STRING" id="10116.ENSRNOP00000045314"/>
<dbReference type="GlyCosmos" id="Q923X6">
    <property type="glycosylation" value="2 sites, No reported glycans"/>
</dbReference>
<dbReference type="GlyGen" id="Q923X6">
    <property type="glycosylation" value="2 sites"/>
</dbReference>
<dbReference type="PaxDb" id="10116-ENSRNOP00000045314"/>
<dbReference type="AGR" id="RGD:1359258"/>
<dbReference type="AGR" id="RGD:631387"/>
<dbReference type="AGR" id="RGD:631388"/>
<dbReference type="AGR" id="RGD:631392"/>
<dbReference type="AGR" id="RGD:631394"/>
<dbReference type="RGD" id="631394">
    <property type="gene designation" value="Taar7e"/>
</dbReference>
<dbReference type="eggNOG" id="KOG3656">
    <property type="taxonomic scope" value="Eukaryota"/>
</dbReference>
<dbReference type="InParanoid" id="Q923X6"/>
<dbReference type="OrthoDB" id="5959645at2759"/>
<dbReference type="PhylomeDB" id="Q923X6"/>
<dbReference type="PRO" id="PR:Q923X6"/>
<dbReference type="Proteomes" id="UP000002494">
    <property type="component" value="Unplaced"/>
</dbReference>
<dbReference type="GO" id="GO:0005886">
    <property type="term" value="C:plasma membrane"/>
    <property type="evidence" value="ECO:0000318"/>
    <property type="project" value="GO_Central"/>
</dbReference>
<dbReference type="GO" id="GO:0001594">
    <property type="term" value="F:trace-amine receptor activity"/>
    <property type="evidence" value="ECO:0000318"/>
    <property type="project" value="GO_Central"/>
</dbReference>
<dbReference type="GO" id="GO:0007186">
    <property type="term" value="P:G protein-coupled receptor signaling pathway"/>
    <property type="evidence" value="ECO:0000318"/>
    <property type="project" value="GO_Central"/>
</dbReference>
<dbReference type="FunFam" id="1.20.1070.10:FF:000030">
    <property type="entry name" value="trace amine-associated receptor 1"/>
    <property type="match status" value="1"/>
</dbReference>
<dbReference type="Gene3D" id="1.20.1070.10">
    <property type="entry name" value="Rhodopsin 7-helix transmembrane proteins"/>
    <property type="match status" value="1"/>
</dbReference>
<dbReference type="InterPro" id="IPR000276">
    <property type="entry name" value="GPCR_Rhodpsn"/>
</dbReference>
<dbReference type="InterPro" id="IPR017452">
    <property type="entry name" value="GPCR_Rhodpsn_7TM"/>
</dbReference>
<dbReference type="InterPro" id="IPR050569">
    <property type="entry name" value="TAAR"/>
</dbReference>
<dbReference type="InterPro" id="IPR009132">
    <property type="entry name" value="TAAR_fam"/>
</dbReference>
<dbReference type="PANTHER" id="PTHR24249">
    <property type="entry name" value="HISTAMINE RECEPTOR-RELATED G-PROTEIN COUPLED RECEPTOR"/>
    <property type="match status" value="1"/>
</dbReference>
<dbReference type="PANTHER" id="PTHR24249:SF78">
    <property type="entry name" value="TRACE AMINE-ASSOCIATED RECEPTOR 7A-RELATED"/>
    <property type="match status" value="1"/>
</dbReference>
<dbReference type="Pfam" id="PF00001">
    <property type="entry name" value="7tm_1"/>
    <property type="match status" value="1"/>
</dbReference>
<dbReference type="PRINTS" id="PR00237">
    <property type="entry name" value="GPCRRHODOPSN"/>
</dbReference>
<dbReference type="PRINTS" id="PR01830">
    <property type="entry name" value="TRACEAMINER"/>
</dbReference>
<dbReference type="SMART" id="SM01381">
    <property type="entry name" value="7TM_GPCR_Srsx"/>
    <property type="match status" value="1"/>
</dbReference>
<dbReference type="SUPFAM" id="SSF81321">
    <property type="entry name" value="Family A G protein-coupled receptor-like"/>
    <property type="match status" value="1"/>
</dbReference>
<dbReference type="PROSITE" id="PS00237">
    <property type="entry name" value="G_PROTEIN_RECEP_F1_1"/>
    <property type="match status" value="1"/>
</dbReference>
<dbReference type="PROSITE" id="PS50262">
    <property type="entry name" value="G_PROTEIN_RECEP_F1_2"/>
    <property type="match status" value="1"/>
</dbReference>
<evidence type="ECO:0000250" key="1">
    <source>
        <dbReference type="UniProtKB" id="Q5QD04"/>
    </source>
</evidence>
<evidence type="ECO:0000250" key="2">
    <source>
        <dbReference type="UniProtKB" id="Q923X5"/>
    </source>
</evidence>
<evidence type="ECO:0000250" key="3">
    <source>
        <dbReference type="UniProtKB" id="Q923Y4"/>
    </source>
</evidence>
<evidence type="ECO:0000255" key="4"/>
<evidence type="ECO:0000255" key="5">
    <source>
        <dbReference type="PROSITE-ProRule" id="PRU00521"/>
    </source>
</evidence>
<evidence type="ECO:0000303" key="6">
    <source>
    </source>
</evidence>
<evidence type="ECO:0000312" key="7">
    <source>
        <dbReference type="RGD" id="631394"/>
    </source>
</evidence>
<name>TAA7E_RAT</name>
<sequence length="358" mass="40217">MATDDASFPWDQDSILSRDLLSALSSQLCYENLNRSCIRSPYSPGPRLILHAVFGFSAVLAVCGNLLVMTSILHFRQLHSPANFLVASLACADLLVGLTVMPFSMVRSVEGCWYFGDIYCKFHSSFDVSFCYSSIFHLCFISVDRYIAVSDPLIYLTRFTASVSGKCITFSWFLSIIYSFSLLYTGASEAGLEDLVSALTCVGGCQLAVNQSWVFINFLLFLVPTLVMMTVYSKVFLIAKQQAQNIEKIGKQTARASESYKDRVAKRERKAAKTLGITVAAFLLSWLPYFIDSIIDAFLGFITPTYVYEILVWIAYYNSAMNPLIYAFFYPWFRKAIKLIVTGKILRENSSATNLFPE</sequence>